<name>TRHO_RALN1</name>
<organism>
    <name type="scientific">Ralstonia nicotianae (strain ATCC BAA-1114 / GMI1000)</name>
    <name type="common">Ralstonia solanacearum</name>
    <dbReference type="NCBI Taxonomy" id="267608"/>
    <lineage>
        <taxon>Bacteria</taxon>
        <taxon>Pseudomonadati</taxon>
        <taxon>Pseudomonadota</taxon>
        <taxon>Betaproteobacteria</taxon>
        <taxon>Burkholderiales</taxon>
        <taxon>Burkholderiaceae</taxon>
        <taxon>Ralstonia</taxon>
        <taxon>Ralstonia solanacearum species complex</taxon>
    </lineage>
</organism>
<accession>Q8XXB0</accession>
<proteinExistence type="inferred from homology"/>
<reference key="1">
    <citation type="journal article" date="2002" name="Nature">
        <title>Genome sequence of the plant pathogen Ralstonia solanacearum.</title>
        <authorList>
            <person name="Salanoubat M."/>
            <person name="Genin S."/>
            <person name="Artiguenave F."/>
            <person name="Gouzy J."/>
            <person name="Mangenot S."/>
            <person name="Arlat M."/>
            <person name="Billault A."/>
            <person name="Brottier P."/>
            <person name="Camus J.-C."/>
            <person name="Cattolico L."/>
            <person name="Chandler M."/>
            <person name="Choisne N."/>
            <person name="Claudel-Renard C."/>
            <person name="Cunnac S."/>
            <person name="Demange N."/>
            <person name="Gaspin C."/>
            <person name="Lavie M."/>
            <person name="Moisan A."/>
            <person name="Robert C."/>
            <person name="Saurin W."/>
            <person name="Schiex T."/>
            <person name="Siguier P."/>
            <person name="Thebault P."/>
            <person name="Whalen M."/>
            <person name="Wincker P."/>
            <person name="Levy M."/>
            <person name="Weissenbach J."/>
            <person name="Boucher C.A."/>
        </authorList>
    </citation>
    <scope>NUCLEOTIDE SEQUENCE [LARGE SCALE GENOMIC DNA]</scope>
    <source>
        <strain>ATCC BAA-1114 / GMI1000</strain>
    </source>
</reference>
<gene>
    <name evidence="1" type="primary">trhO</name>
    <name type="ordered locus">RSc2206</name>
    <name type="ORF">RS01393</name>
</gene>
<feature type="chain" id="PRO_0000161500" description="tRNA uridine(34) hydroxylase">
    <location>
        <begin position="1"/>
        <end position="282"/>
    </location>
</feature>
<feature type="domain" description="Rhodanese" evidence="1">
    <location>
        <begin position="128"/>
        <end position="222"/>
    </location>
</feature>
<feature type="active site" description="Cysteine persulfide intermediate" evidence="1">
    <location>
        <position position="182"/>
    </location>
</feature>
<dbReference type="EC" id="1.14.-.-" evidence="1"/>
<dbReference type="EMBL" id="AL646052">
    <property type="protein sequence ID" value="CAD15913.1"/>
    <property type="molecule type" value="Genomic_DNA"/>
</dbReference>
<dbReference type="RefSeq" id="WP_011002134.1">
    <property type="nucleotide sequence ID" value="NC_003295.1"/>
</dbReference>
<dbReference type="SMR" id="Q8XXB0"/>
<dbReference type="STRING" id="267608.RSc2206"/>
<dbReference type="EnsemblBacteria" id="CAD15913">
    <property type="protein sequence ID" value="CAD15913"/>
    <property type="gene ID" value="RSc2206"/>
</dbReference>
<dbReference type="KEGG" id="rso:RSc2206"/>
<dbReference type="eggNOG" id="COG1054">
    <property type="taxonomic scope" value="Bacteria"/>
</dbReference>
<dbReference type="HOGENOM" id="CLU_038878_0_1_4"/>
<dbReference type="Proteomes" id="UP000001436">
    <property type="component" value="Chromosome"/>
</dbReference>
<dbReference type="GO" id="GO:0016705">
    <property type="term" value="F:oxidoreductase activity, acting on paired donors, with incorporation or reduction of molecular oxygen"/>
    <property type="evidence" value="ECO:0007669"/>
    <property type="project" value="UniProtKB-UniRule"/>
</dbReference>
<dbReference type="GO" id="GO:0006400">
    <property type="term" value="P:tRNA modification"/>
    <property type="evidence" value="ECO:0007669"/>
    <property type="project" value="UniProtKB-UniRule"/>
</dbReference>
<dbReference type="CDD" id="cd01518">
    <property type="entry name" value="RHOD_YceA"/>
    <property type="match status" value="1"/>
</dbReference>
<dbReference type="Gene3D" id="3.30.70.100">
    <property type="match status" value="1"/>
</dbReference>
<dbReference type="Gene3D" id="3.40.250.10">
    <property type="entry name" value="Rhodanese-like domain"/>
    <property type="match status" value="1"/>
</dbReference>
<dbReference type="HAMAP" id="MF_00469">
    <property type="entry name" value="TrhO"/>
    <property type="match status" value="1"/>
</dbReference>
<dbReference type="InterPro" id="IPR001763">
    <property type="entry name" value="Rhodanese-like_dom"/>
</dbReference>
<dbReference type="InterPro" id="IPR036873">
    <property type="entry name" value="Rhodanese-like_dom_sf"/>
</dbReference>
<dbReference type="InterPro" id="IPR020936">
    <property type="entry name" value="TrhO"/>
</dbReference>
<dbReference type="InterPro" id="IPR040503">
    <property type="entry name" value="TRHO_N"/>
</dbReference>
<dbReference type="NCBIfam" id="NF003703">
    <property type="entry name" value="PRK05320.1"/>
    <property type="match status" value="1"/>
</dbReference>
<dbReference type="PANTHER" id="PTHR43268:SF3">
    <property type="entry name" value="RHODANESE-LIKE DOMAIN-CONTAINING PROTEIN 7-RELATED"/>
    <property type="match status" value="1"/>
</dbReference>
<dbReference type="PANTHER" id="PTHR43268">
    <property type="entry name" value="THIOSULFATE SULFURTRANSFERASE/RHODANESE-LIKE DOMAIN-CONTAINING PROTEIN 2"/>
    <property type="match status" value="1"/>
</dbReference>
<dbReference type="Pfam" id="PF00581">
    <property type="entry name" value="Rhodanese"/>
    <property type="match status" value="1"/>
</dbReference>
<dbReference type="Pfam" id="PF17773">
    <property type="entry name" value="UPF0176_N"/>
    <property type="match status" value="1"/>
</dbReference>
<dbReference type="SMART" id="SM00450">
    <property type="entry name" value="RHOD"/>
    <property type="match status" value="1"/>
</dbReference>
<dbReference type="SUPFAM" id="SSF52821">
    <property type="entry name" value="Rhodanese/Cell cycle control phosphatase"/>
    <property type="match status" value="1"/>
</dbReference>
<dbReference type="PROSITE" id="PS50206">
    <property type="entry name" value="RHODANESE_3"/>
    <property type="match status" value="1"/>
</dbReference>
<comment type="function">
    <text evidence="1">Catalyzes oxygen-dependent 5-hydroxyuridine (ho5U) modification at position 34 in tRNAs.</text>
</comment>
<comment type="catalytic activity">
    <reaction evidence="1">
        <text>uridine(34) in tRNA + AH2 + O2 = 5-hydroxyuridine(34) in tRNA + A + H2O</text>
        <dbReference type="Rhea" id="RHEA:64224"/>
        <dbReference type="Rhea" id="RHEA-COMP:11727"/>
        <dbReference type="Rhea" id="RHEA-COMP:13381"/>
        <dbReference type="ChEBI" id="CHEBI:13193"/>
        <dbReference type="ChEBI" id="CHEBI:15377"/>
        <dbReference type="ChEBI" id="CHEBI:15379"/>
        <dbReference type="ChEBI" id="CHEBI:17499"/>
        <dbReference type="ChEBI" id="CHEBI:65315"/>
        <dbReference type="ChEBI" id="CHEBI:136877"/>
    </reaction>
</comment>
<comment type="similarity">
    <text evidence="1">Belongs to the TrhO family.</text>
</comment>
<evidence type="ECO:0000255" key="1">
    <source>
        <dbReference type="HAMAP-Rule" id="MF_00469"/>
    </source>
</evidence>
<sequence>MQIVNISAYKFVTLNDRETLRPALLAECQARDLKGTVLLAPEGINIFLAGSREAIDGIVGWLRADARFADLAPKESLSDHQPFRRLLVRLKKEIITMRYPLIRPEDGRAPSLPPATLKRWLDQGHDDDGREVVMLDTRNGFEVAVGTFRDAVEYGIRKFTEFPPAIAAHKDDFAGKTVVSFCTGGIRCEKAAIHMQEIGLQHVYQLEGGILKYFEEVGADHYDGDCFVFDHRTALNAELLPAGPKQCFACRAVVTPEEQQSADYIPGQRCPHCADHQARAAT</sequence>
<keyword id="KW-0560">Oxidoreductase</keyword>
<keyword id="KW-1185">Reference proteome</keyword>
<keyword id="KW-0819">tRNA processing</keyword>
<protein>
    <recommendedName>
        <fullName evidence="1">tRNA uridine(34) hydroxylase</fullName>
        <ecNumber evidence="1">1.14.-.-</ecNumber>
    </recommendedName>
    <alternativeName>
        <fullName evidence="1">tRNA hydroxylation protein O</fullName>
    </alternativeName>
</protein>